<keyword id="KW-0028">Amino-acid biosynthesis</keyword>
<keyword id="KW-0479">Metal-binding</keyword>
<keyword id="KW-0486">Methionine biosynthesis</keyword>
<keyword id="KW-0489">Methyltransferase</keyword>
<keyword id="KW-1185">Reference proteome</keyword>
<keyword id="KW-0677">Repeat</keyword>
<keyword id="KW-0808">Transferase</keyword>
<keyword id="KW-0862">Zinc</keyword>
<feature type="chain" id="PRO_0000098627" description="5-methyltetrahydropteroyltriglutamate--homocysteine methyltransferase">
    <location>
        <begin position="1"/>
        <end position="745"/>
    </location>
</feature>
<feature type="active site" description="Proton donor" evidence="1">
    <location>
        <position position="681"/>
    </location>
</feature>
<feature type="binding site" evidence="1">
    <location>
        <begin position="19"/>
        <end position="22"/>
    </location>
    <ligand>
        <name>5-methyltetrahydropteroyltri-L-glutamate</name>
        <dbReference type="ChEBI" id="CHEBI:58207"/>
    </ligand>
</feature>
<feature type="binding site" evidence="1">
    <location>
        <position position="119"/>
    </location>
    <ligand>
        <name>5-methyltetrahydropteroyltri-L-glutamate</name>
        <dbReference type="ChEBI" id="CHEBI:58207"/>
    </ligand>
</feature>
<feature type="binding site" evidence="1">
    <location>
        <begin position="418"/>
        <end position="420"/>
    </location>
    <ligand>
        <name>L-homocysteine</name>
        <dbReference type="ChEBI" id="CHEBI:58199"/>
    </ligand>
</feature>
<feature type="binding site" evidence="1">
    <location>
        <begin position="418"/>
        <end position="420"/>
    </location>
    <ligand>
        <name>L-methionine</name>
        <dbReference type="ChEBI" id="CHEBI:57844"/>
    </ligand>
</feature>
<feature type="binding site" evidence="1">
    <location>
        <position position="471"/>
    </location>
    <ligand>
        <name>L-homocysteine</name>
        <dbReference type="ChEBI" id="CHEBI:58199"/>
    </ligand>
</feature>
<feature type="binding site" evidence="1">
    <location>
        <position position="471"/>
    </location>
    <ligand>
        <name>L-methionine</name>
        <dbReference type="ChEBI" id="CHEBI:57844"/>
    </ligand>
</feature>
<feature type="binding site" evidence="1">
    <location>
        <begin position="502"/>
        <end position="503"/>
    </location>
    <ligand>
        <name>5-methyltetrahydropteroyltri-L-glutamate</name>
        <dbReference type="ChEBI" id="CHEBI:58207"/>
    </ligand>
</feature>
<feature type="binding site" evidence="1">
    <location>
        <position position="548"/>
    </location>
    <ligand>
        <name>5-methyltetrahydropteroyltri-L-glutamate</name>
        <dbReference type="ChEBI" id="CHEBI:58207"/>
    </ligand>
</feature>
<feature type="binding site" evidence="1">
    <location>
        <position position="586"/>
    </location>
    <ligand>
        <name>L-homocysteine</name>
        <dbReference type="ChEBI" id="CHEBI:58199"/>
    </ligand>
</feature>
<feature type="binding site" evidence="1">
    <location>
        <position position="586"/>
    </location>
    <ligand>
        <name>L-methionine</name>
        <dbReference type="ChEBI" id="CHEBI:57844"/>
    </ligand>
</feature>
<feature type="binding site" evidence="1">
    <location>
        <position position="592"/>
    </location>
    <ligand>
        <name>5-methyltetrahydropteroyltri-L-glutamate</name>
        <dbReference type="ChEBI" id="CHEBI:58207"/>
    </ligand>
</feature>
<feature type="binding site" evidence="1">
    <location>
        <position position="628"/>
    </location>
    <ligand>
        <name>Zn(2+)</name>
        <dbReference type="ChEBI" id="CHEBI:29105"/>
        <note>catalytic</note>
    </ligand>
</feature>
<feature type="binding site" evidence="1">
    <location>
        <position position="630"/>
    </location>
    <ligand>
        <name>Zn(2+)</name>
        <dbReference type="ChEBI" id="CHEBI:29105"/>
        <note>catalytic</note>
    </ligand>
</feature>
<feature type="binding site" evidence="1">
    <location>
        <position position="652"/>
    </location>
    <ligand>
        <name>Zn(2+)</name>
        <dbReference type="ChEBI" id="CHEBI:29105"/>
        <note>catalytic</note>
    </ligand>
</feature>
<feature type="binding site" evidence="1">
    <location>
        <position position="713"/>
    </location>
    <ligand>
        <name>Zn(2+)</name>
        <dbReference type="ChEBI" id="CHEBI:29105"/>
        <note>catalytic</note>
    </ligand>
</feature>
<gene>
    <name evidence="1" type="primary">metE</name>
    <name type="ordered locus">Cgl1139</name>
    <name type="ordered locus">cg1290</name>
</gene>
<accession>Q8NRB3</accession>
<dbReference type="EC" id="2.1.1.14" evidence="1"/>
<dbReference type="EMBL" id="BA000036">
    <property type="protein sequence ID" value="BAB98532.1"/>
    <property type="molecule type" value="Genomic_DNA"/>
</dbReference>
<dbReference type="EMBL" id="BX927151">
    <property type="protein sequence ID" value="CAF19845.1"/>
    <property type="molecule type" value="Genomic_DNA"/>
</dbReference>
<dbReference type="RefSeq" id="NP_600367.1">
    <property type="nucleotide sequence ID" value="NC_003450.3"/>
</dbReference>
<dbReference type="RefSeq" id="WP_011014148.1">
    <property type="nucleotide sequence ID" value="NC_006958.1"/>
</dbReference>
<dbReference type="SMR" id="Q8NRB3"/>
<dbReference type="STRING" id="196627.cg1290"/>
<dbReference type="GeneID" id="1019124"/>
<dbReference type="KEGG" id="cgb:cg1290"/>
<dbReference type="KEGG" id="cgl:Cgl1139"/>
<dbReference type="PATRIC" id="fig|196627.13.peg.1118"/>
<dbReference type="eggNOG" id="COG0620">
    <property type="taxonomic scope" value="Bacteria"/>
</dbReference>
<dbReference type="HOGENOM" id="CLU_013175_0_0_11"/>
<dbReference type="OrthoDB" id="244285at2"/>
<dbReference type="BioCyc" id="CORYNE:G18NG-10711-MONOMER"/>
<dbReference type="BioCyc" id="MetaCyc:G18NG-10711-MONOMER"/>
<dbReference type="UniPathway" id="UPA00051">
    <property type="reaction ID" value="UER00082"/>
</dbReference>
<dbReference type="Proteomes" id="UP000000582">
    <property type="component" value="Chromosome"/>
</dbReference>
<dbReference type="Proteomes" id="UP000001009">
    <property type="component" value="Chromosome"/>
</dbReference>
<dbReference type="GO" id="GO:0003871">
    <property type="term" value="F:5-methyltetrahydropteroyltriglutamate-homocysteine S-methyltransferase activity"/>
    <property type="evidence" value="ECO:0007669"/>
    <property type="project" value="UniProtKB-UniRule"/>
</dbReference>
<dbReference type="GO" id="GO:0008270">
    <property type="term" value="F:zinc ion binding"/>
    <property type="evidence" value="ECO:0007669"/>
    <property type="project" value="InterPro"/>
</dbReference>
<dbReference type="GO" id="GO:0009086">
    <property type="term" value="P:methionine biosynthetic process"/>
    <property type="evidence" value="ECO:0007669"/>
    <property type="project" value="UniProtKB-UniRule"/>
</dbReference>
<dbReference type="GO" id="GO:0032259">
    <property type="term" value="P:methylation"/>
    <property type="evidence" value="ECO:0007669"/>
    <property type="project" value="UniProtKB-KW"/>
</dbReference>
<dbReference type="CDD" id="cd03311">
    <property type="entry name" value="CIMS_C_terminal_like"/>
    <property type="match status" value="1"/>
</dbReference>
<dbReference type="CDD" id="cd03312">
    <property type="entry name" value="CIMS_N_terminal_like"/>
    <property type="match status" value="1"/>
</dbReference>
<dbReference type="Gene3D" id="3.20.20.210">
    <property type="match status" value="2"/>
</dbReference>
<dbReference type="HAMAP" id="MF_00172">
    <property type="entry name" value="Meth_synth"/>
    <property type="match status" value="1"/>
</dbReference>
<dbReference type="InterPro" id="IPR013215">
    <property type="entry name" value="Cbl-indep_Met_Synth_N"/>
</dbReference>
<dbReference type="InterPro" id="IPR006276">
    <property type="entry name" value="Cobalamin-indep_Met_synthase"/>
</dbReference>
<dbReference type="InterPro" id="IPR002629">
    <property type="entry name" value="Met_Synth_C/arc"/>
</dbReference>
<dbReference type="InterPro" id="IPR038071">
    <property type="entry name" value="UROD/MetE-like_sf"/>
</dbReference>
<dbReference type="NCBIfam" id="TIGR01371">
    <property type="entry name" value="met_syn_B12ind"/>
    <property type="match status" value="1"/>
</dbReference>
<dbReference type="NCBIfam" id="NF003556">
    <property type="entry name" value="PRK05222.1"/>
    <property type="match status" value="1"/>
</dbReference>
<dbReference type="PANTHER" id="PTHR30519">
    <property type="entry name" value="5-METHYLTETRAHYDROPTEROYLTRIGLUTAMATE--HOMOCYSTEINE METHYLTRANSFERASE"/>
    <property type="match status" value="1"/>
</dbReference>
<dbReference type="Pfam" id="PF08267">
    <property type="entry name" value="Meth_synt_1"/>
    <property type="match status" value="1"/>
</dbReference>
<dbReference type="Pfam" id="PF01717">
    <property type="entry name" value="Meth_synt_2"/>
    <property type="match status" value="1"/>
</dbReference>
<dbReference type="PIRSF" id="PIRSF000382">
    <property type="entry name" value="MeTrfase_B12_ind"/>
    <property type="match status" value="1"/>
</dbReference>
<dbReference type="SUPFAM" id="SSF51726">
    <property type="entry name" value="UROD/MetE-like"/>
    <property type="match status" value="2"/>
</dbReference>
<evidence type="ECO:0000255" key="1">
    <source>
        <dbReference type="HAMAP-Rule" id="MF_00172"/>
    </source>
</evidence>
<name>METE_CORGL</name>
<protein>
    <recommendedName>
        <fullName evidence="1">5-methyltetrahydropteroyltriglutamate--homocysteine methyltransferase</fullName>
        <ecNumber evidence="1">2.1.1.14</ecNumber>
    </recommendedName>
    <alternativeName>
        <fullName evidence="1">Cobalamin-independent methionine synthase</fullName>
    </alternativeName>
    <alternativeName>
        <fullName evidence="1">Methionine synthase, vitamin-B12 independent isozyme</fullName>
    </alternativeName>
</protein>
<sequence>MTSNFSSTVAGLPRIGAKRELKFALEGYWNGSIEGRELAQTARQLVNTASDSLSGLDSVPFAGRSYYDAMLDTAAILGVLPERFDDIADHENDGLPLWIDRYFGAARGTETLPAQAMTKWFDTNYHYLVPELSADTRFVLDASALIEDLRCQQVRGVNARPVLVGPLTFLSLARTTDGSNPLDHLPALFEVYERLIKSFDTEWVQIDEPALVTDVAPEVLEQVRAGYTTLAKRDGVFVNTYFGSGDQALNTLAGIGLGAIGVDLVTHGVTELAAWKGEELLVAGIVDGRNIWRTDLCAALASLKRLAARGPIAVSTSCSLLHVPYTLEAENIEPEVRDWLAFGSEKITEVKLLADALAGNIDAAAFDAASAAIASRRTSPRTAPITQELPGRSRGSFDTRVTLQEKSLELPALPTTTIGSFPQTPSIRSARARLRKESITLEQYEEAMREEIDLVIAKQEELGLDVLVHGEPERNDMVQYFSELLDGFLSTANGWVQSYGSRCVRPPVLFGNVSRPAPMTVKWFQYAQSLTQKHVKGMLTGPVTILAWSFVRDDQPLATTADQVALALRDEINDLIEAGAKIIQVDEPAIRELLPLRDVDKPAYLQWSVDSFRLATAGAPDDVQIHTHMCYSEFNEVISSVIALDADVTTIEAARSDMQVLAALKSSGFELGVGPGVWDIHSPRVPSAQEVDGLLEAALQSVDPRQLWVNPDCGLKTRGWPEVEASLKVLVESAKQAREKIGATI</sequence>
<organism>
    <name type="scientific">Corynebacterium glutamicum (strain ATCC 13032 / DSM 20300 / JCM 1318 / BCRC 11384 / CCUG 27702 / LMG 3730 / NBRC 12168 / NCIMB 10025 / NRRL B-2784 / 534)</name>
    <dbReference type="NCBI Taxonomy" id="196627"/>
    <lineage>
        <taxon>Bacteria</taxon>
        <taxon>Bacillati</taxon>
        <taxon>Actinomycetota</taxon>
        <taxon>Actinomycetes</taxon>
        <taxon>Mycobacteriales</taxon>
        <taxon>Corynebacteriaceae</taxon>
        <taxon>Corynebacterium</taxon>
    </lineage>
</organism>
<proteinExistence type="inferred from homology"/>
<reference key="1">
    <citation type="journal article" date="2003" name="Appl. Microbiol. Biotechnol.">
        <title>The Corynebacterium glutamicum genome: features and impacts on biotechnological processes.</title>
        <authorList>
            <person name="Ikeda M."/>
            <person name="Nakagawa S."/>
        </authorList>
    </citation>
    <scope>NUCLEOTIDE SEQUENCE [LARGE SCALE GENOMIC DNA]</scope>
    <source>
        <strain>ATCC 13032 / DSM 20300 / JCM 1318 / BCRC 11384 / CCUG 27702 / LMG 3730 / NBRC 12168 / NCIMB 10025 / NRRL B-2784 / 534</strain>
    </source>
</reference>
<reference key="2">
    <citation type="journal article" date="2003" name="J. Biotechnol.">
        <title>The complete Corynebacterium glutamicum ATCC 13032 genome sequence and its impact on the production of L-aspartate-derived amino acids and vitamins.</title>
        <authorList>
            <person name="Kalinowski J."/>
            <person name="Bathe B."/>
            <person name="Bartels D."/>
            <person name="Bischoff N."/>
            <person name="Bott M."/>
            <person name="Burkovski A."/>
            <person name="Dusch N."/>
            <person name="Eggeling L."/>
            <person name="Eikmanns B.J."/>
            <person name="Gaigalat L."/>
            <person name="Goesmann A."/>
            <person name="Hartmann M."/>
            <person name="Huthmacher K."/>
            <person name="Kraemer R."/>
            <person name="Linke B."/>
            <person name="McHardy A.C."/>
            <person name="Meyer F."/>
            <person name="Moeckel B."/>
            <person name="Pfefferle W."/>
            <person name="Puehler A."/>
            <person name="Rey D.A."/>
            <person name="Rueckert C."/>
            <person name="Rupp O."/>
            <person name="Sahm H."/>
            <person name="Wendisch V.F."/>
            <person name="Wiegraebe I."/>
            <person name="Tauch A."/>
        </authorList>
    </citation>
    <scope>NUCLEOTIDE SEQUENCE [LARGE SCALE GENOMIC DNA]</scope>
    <source>
        <strain>ATCC 13032 / DSM 20300 / JCM 1318 / BCRC 11384 / CCUG 27702 / LMG 3730 / NBRC 12168 / NCIMB 10025 / NRRL B-2784 / 534</strain>
    </source>
</reference>
<comment type="function">
    <text evidence="1">Catalyzes the transfer of a methyl group from 5-methyltetrahydrofolate to homocysteine resulting in methionine formation.</text>
</comment>
<comment type="catalytic activity">
    <reaction evidence="1">
        <text>5-methyltetrahydropteroyltri-L-glutamate + L-homocysteine = tetrahydropteroyltri-L-glutamate + L-methionine</text>
        <dbReference type="Rhea" id="RHEA:21196"/>
        <dbReference type="ChEBI" id="CHEBI:57844"/>
        <dbReference type="ChEBI" id="CHEBI:58140"/>
        <dbReference type="ChEBI" id="CHEBI:58199"/>
        <dbReference type="ChEBI" id="CHEBI:58207"/>
        <dbReference type="EC" id="2.1.1.14"/>
    </reaction>
</comment>
<comment type="cofactor">
    <cofactor evidence="1">
        <name>Zn(2+)</name>
        <dbReference type="ChEBI" id="CHEBI:29105"/>
    </cofactor>
    <text evidence="1">Binds 1 zinc ion per subunit.</text>
</comment>
<comment type="pathway">
    <text evidence="1">Amino-acid biosynthesis; L-methionine biosynthesis via de novo pathway; L-methionine from L-homocysteine (MetE route): step 1/1.</text>
</comment>
<comment type="similarity">
    <text evidence="1">Belongs to the vitamin-B12 independent methionine synthase family.</text>
</comment>